<proteinExistence type="inferred from homology"/>
<dbReference type="EC" id="3.1.1.29" evidence="1"/>
<dbReference type="EMBL" id="AE004439">
    <property type="protein sequence ID" value="AAK02248.1"/>
    <property type="molecule type" value="Genomic_DNA"/>
</dbReference>
<dbReference type="RefSeq" id="WP_010906512.1">
    <property type="nucleotide sequence ID" value="NC_002663.1"/>
</dbReference>
<dbReference type="SMR" id="P57820"/>
<dbReference type="STRING" id="272843.PM0164"/>
<dbReference type="EnsemblBacteria" id="AAK02248">
    <property type="protein sequence ID" value="AAK02248"/>
    <property type="gene ID" value="PM0164"/>
</dbReference>
<dbReference type="KEGG" id="pmu:PM0164"/>
<dbReference type="PATRIC" id="fig|272843.6.peg.169"/>
<dbReference type="HOGENOM" id="CLU_062456_3_1_6"/>
<dbReference type="OrthoDB" id="9800507at2"/>
<dbReference type="Proteomes" id="UP000000809">
    <property type="component" value="Chromosome"/>
</dbReference>
<dbReference type="GO" id="GO:0005737">
    <property type="term" value="C:cytoplasm"/>
    <property type="evidence" value="ECO:0007669"/>
    <property type="project" value="UniProtKB-SubCell"/>
</dbReference>
<dbReference type="GO" id="GO:0004045">
    <property type="term" value="F:peptidyl-tRNA hydrolase activity"/>
    <property type="evidence" value="ECO:0007669"/>
    <property type="project" value="UniProtKB-UniRule"/>
</dbReference>
<dbReference type="GO" id="GO:0000049">
    <property type="term" value="F:tRNA binding"/>
    <property type="evidence" value="ECO:0007669"/>
    <property type="project" value="UniProtKB-UniRule"/>
</dbReference>
<dbReference type="GO" id="GO:0006515">
    <property type="term" value="P:protein quality control for misfolded or incompletely synthesized proteins"/>
    <property type="evidence" value="ECO:0007669"/>
    <property type="project" value="UniProtKB-UniRule"/>
</dbReference>
<dbReference type="GO" id="GO:0072344">
    <property type="term" value="P:rescue of stalled ribosome"/>
    <property type="evidence" value="ECO:0007669"/>
    <property type="project" value="UniProtKB-UniRule"/>
</dbReference>
<dbReference type="CDD" id="cd00462">
    <property type="entry name" value="PTH"/>
    <property type="match status" value="1"/>
</dbReference>
<dbReference type="FunFam" id="3.40.50.1470:FF:000001">
    <property type="entry name" value="Peptidyl-tRNA hydrolase"/>
    <property type="match status" value="1"/>
</dbReference>
<dbReference type="Gene3D" id="3.40.50.1470">
    <property type="entry name" value="Peptidyl-tRNA hydrolase"/>
    <property type="match status" value="1"/>
</dbReference>
<dbReference type="HAMAP" id="MF_00083">
    <property type="entry name" value="Pept_tRNA_hydro_bact"/>
    <property type="match status" value="1"/>
</dbReference>
<dbReference type="InterPro" id="IPR001328">
    <property type="entry name" value="Pept_tRNA_hydro"/>
</dbReference>
<dbReference type="InterPro" id="IPR018171">
    <property type="entry name" value="Pept_tRNA_hydro_CS"/>
</dbReference>
<dbReference type="InterPro" id="IPR036416">
    <property type="entry name" value="Pept_tRNA_hydro_sf"/>
</dbReference>
<dbReference type="NCBIfam" id="TIGR00447">
    <property type="entry name" value="pth"/>
    <property type="match status" value="1"/>
</dbReference>
<dbReference type="PANTHER" id="PTHR17224">
    <property type="entry name" value="PEPTIDYL-TRNA HYDROLASE"/>
    <property type="match status" value="1"/>
</dbReference>
<dbReference type="PANTHER" id="PTHR17224:SF1">
    <property type="entry name" value="PEPTIDYL-TRNA HYDROLASE"/>
    <property type="match status" value="1"/>
</dbReference>
<dbReference type="Pfam" id="PF01195">
    <property type="entry name" value="Pept_tRNA_hydro"/>
    <property type="match status" value="1"/>
</dbReference>
<dbReference type="SUPFAM" id="SSF53178">
    <property type="entry name" value="Peptidyl-tRNA hydrolase-like"/>
    <property type="match status" value="1"/>
</dbReference>
<dbReference type="PROSITE" id="PS01195">
    <property type="entry name" value="PEPT_TRNA_HYDROL_1"/>
    <property type="match status" value="1"/>
</dbReference>
<dbReference type="PROSITE" id="PS01196">
    <property type="entry name" value="PEPT_TRNA_HYDROL_2"/>
    <property type="match status" value="1"/>
</dbReference>
<sequence length="194" mass="21334">MSEIKLIVGLGNPGDKYADTRHNAGEWLINRLARQFHFSLTPESKFSGKTARTVINGNEIRFLVPTTFMNLSGKAISSLANFYRIKPEEILVIHDELDLPPGVAKIKQGGGHGGHNGLRDTIAQLGNNKNFYRLRVGIGHPGDKNLVSAYVLNKPSLTDWQLIDKALDEATSCVDILIKDGITKATNRLNAFKA</sequence>
<reference key="1">
    <citation type="journal article" date="2001" name="Proc. Natl. Acad. Sci. U.S.A.">
        <title>Complete genomic sequence of Pasteurella multocida Pm70.</title>
        <authorList>
            <person name="May B.J."/>
            <person name="Zhang Q."/>
            <person name="Li L.L."/>
            <person name="Paustian M.L."/>
            <person name="Whittam T.S."/>
            <person name="Kapur V."/>
        </authorList>
    </citation>
    <scope>NUCLEOTIDE SEQUENCE [LARGE SCALE GENOMIC DNA]</scope>
    <source>
        <strain>Pm70</strain>
    </source>
</reference>
<gene>
    <name evidence="1" type="primary">pth</name>
    <name type="ordered locus">PM0164</name>
</gene>
<protein>
    <recommendedName>
        <fullName evidence="1">Peptidyl-tRNA hydrolase</fullName>
        <shortName evidence="1">Pth</shortName>
        <ecNumber evidence="1">3.1.1.29</ecNumber>
    </recommendedName>
</protein>
<name>PTH_PASMU</name>
<keyword id="KW-0963">Cytoplasm</keyword>
<keyword id="KW-0378">Hydrolase</keyword>
<keyword id="KW-1185">Reference proteome</keyword>
<keyword id="KW-0694">RNA-binding</keyword>
<keyword id="KW-0820">tRNA-binding</keyword>
<accession>P57820</accession>
<feature type="chain" id="PRO_0000187788" description="Peptidyl-tRNA hydrolase">
    <location>
        <begin position="1"/>
        <end position="194"/>
    </location>
</feature>
<feature type="active site" description="Proton acceptor" evidence="1">
    <location>
        <position position="22"/>
    </location>
</feature>
<feature type="binding site" evidence="1">
    <location>
        <position position="17"/>
    </location>
    <ligand>
        <name>tRNA</name>
        <dbReference type="ChEBI" id="CHEBI:17843"/>
    </ligand>
</feature>
<feature type="binding site" evidence="1">
    <location>
        <position position="68"/>
    </location>
    <ligand>
        <name>tRNA</name>
        <dbReference type="ChEBI" id="CHEBI:17843"/>
    </ligand>
</feature>
<feature type="binding site" evidence="1">
    <location>
        <position position="70"/>
    </location>
    <ligand>
        <name>tRNA</name>
        <dbReference type="ChEBI" id="CHEBI:17843"/>
    </ligand>
</feature>
<feature type="binding site" evidence="1">
    <location>
        <position position="116"/>
    </location>
    <ligand>
        <name>tRNA</name>
        <dbReference type="ChEBI" id="CHEBI:17843"/>
    </ligand>
</feature>
<feature type="site" description="Discriminates between blocked and unblocked aminoacyl-tRNA" evidence="1">
    <location>
        <position position="12"/>
    </location>
</feature>
<feature type="site" description="Stabilizes the basic form of H active site to accept a proton" evidence="1">
    <location>
        <position position="95"/>
    </location>
</feature>
<comment type="function">
    <text evidence="1">Hydrolyzes ribosome-free peptidyl-tRNAs (with 1 or more amino acids incorporated), which drop off the ribosome during protein synthesis, or as a result of ribosome stalling.</text>
</comment>
<comment type="function">
    <text evidence="1">Catalyzes the release of premature peptidyl moieties from peptidyl-tRNA molecules trapped in stalled 50S ribosomal subunits, and thus maintains levels of free tRNAs and 50S ribosomes.</text>
</comment>
<comment type="catalytic activity">
    <reaction evidence="1">
        <text>an N-acyl-L-alpha-aminoacyl-tRNA + H2O = an N-acyl-L-amino acid + a tRNA + H(+)</text>
        <dbReference type="Rhea" id="RHEA:54448"/>
        <dbReference type="Rhea" id="RHEA-COMP:10123"/>
        <dbReference type="Rhea" id="RHEA-COMP:13883"/>
        <dbReference type="ChEBI" id="CHEBI:15377"/>
        <dbReference type="ChEBI" id="CHEBI:15378"/>
        <dbReference type="ChEBI" id="CHEBI:59874"/>
        <dbReference type="ChEBI" id="CHEBI:78442"/>
        <dbReference type="ChEBI" id="CHEBI:138191"/>
        <dbReference type="EC" id="3.1.1.29"/>
    </reaction>
</comment>
<comment type="subunit">
    <text evidence="1">Monomer.</text>
</comment>
<comment type="subcellular location">
    <subcellularLocation>
        <location evidence="1">Cytoplasm</location>
    </subcellularLocation>
</comment>
<comment type="similarity">
    <text evidence="1">Belongs to the PTH family.</text>
</comment>
<evidence type="ECO:0000255" key="1">
    <source>
        <dbReference type="HAMAP-Rule" id="MF_00083"/>
    </source>
</evidence>
<organism>
    <name type="scientific">Pasteurella multocida (strain Pm70)</name>
    <dbReference type="NCBI Taxonomy" id="272843"/>
    <lineage>
        <taxon>Bacteria</taxon>
        <taxon>Pseudomonadati</taxon>
        <taxon>Pseudomonadota</taxon>
        <taxon>Gammaproteobacteria</taxon>
        <taxon>Pasteurellales</taxon>
        <taxon>Pasteurellaceae</taxon>
        <taxon>Pasteurella</taxon>
    </lineage>
</organism>